<organism>
    <name type="scientific">Rattus norvegicus</name>
    <name type="common">Rat</name>
    <dbReference type="NCBI Taxonomy" id="10116"/>
    <lineage>
        <taxon>Eukaryota</taxon>
        <taxon>Metazoa</taxon>
        <taxon>Chordata</taxon>
        <taxon>Craniata</taxon>
        <taxon>Vertebrata</taxon>
        <taxon>Euteleostomi</taxon>
        <taxon>Mammalia</taxon>
        <taxon>Eutheria</taxon>
        <taxon>Euarchontoglires</taxon>
        <taxon>Glires</taxon>
        <taxon>Rodentia</taxon>
        <taxon>Myomorpha</taxon>
        <taxon>Muroidea</taxon>
        <taxon>Muridae</taxon>
        <taxon>Murinae</taxon>
        <taxon>Rattus</taxon>
    </lineage>
</organism>
<proteinExistence type="evidence at protein level"/>
<comment type="function">
    <text evidence="5">Required for renal function.</text>
</comment>
<comment type="subunit">
    <text evidence="1 6 7 8 9 10">Homooligomer (PubMed:19324013). Interacts with NEK8 (By similarity). Central component of a complex containing at least ANKS6, INVS, NEK8 and NPHP3 (PubMed:23793029). ANKS6 may organize complex assembly by linking INVS and NPHP3 to NEK8 and INVS may target the complex to the proximal ciliary axoneme (PubMed:23793029). Interacts (via SAM domain) with BICC1 (via KH domains) in an RNA-dependent manner (PubMed:19324013). Interacts (via SAM domain) with ANKS3 (via SAM domain) (PubMed:25671767, PubMed:26188091, PubMed:26327442).</text>
</comment>
<comment type="subcellular location">
    <subcellularLocation>
        <location evidence="2">Cell projection</location>
        <location evidence="2">Cilium</location>
    </subcellularLocation>
    <subcellularLocation>
        <location evidence="6">Cytoplasm</location>
    </subcellularLocation>
    <text evidence="2">Localizes to the proximal region of the primary cilium in the presence of INVS.</text>
</comment>
<comment type="tissue specificity">
    <text evidence="5">Widely expressed with moderate level in brain, skeletal muscle and testis. Expressed in renal tubules.</text>
</comment>
<comment type="domain">
    <text evidence="7">The ankyrin repeats are necessary and sufficient for NEK8-binding.</text>
</comment>
<comment type="PTM">
    <text evidence="7">Hydroxylated at Asn-129, most probably by HIF1AN. This hydroxylation results in decreased NEK8-binding.</text>
</comment>
<comment type="disease">
    <text evidence="5 6 10">Defects in Anks6 are the cause of polycystic kidney disease (cy). Heterozygous cy rats are characterized by progressive formation and enlargement of cysts in kidneys.</text>
</comment>
<comment type="sequence caution" evidence="11">
    <conflict type="erroneous translation">
        <sequence resource="EMBL-CDS" id="AAH91436"/>
    </conflict>
    <text>Wrong choice of frame.</text>
</comment>
<gene>
    <name type="primary">Anks6</name>
    <name type="synonym">Pkdr1</name>
    <name type="synonym">Samd6</name>
</gene>
<evidence type="ECO:0000250" key="1">
    <source>
        <dbReference type="UniProtKB" id="Q68DC2"/>
    </source>
</evidence>
<evidence type="ECO:0000250" key="2">
    <source>
        <dbReference type="UniProtKB" id="Q6GQX6"/>
    </source>
</evidence>
<evidence type="ECO:0000255" key="3">
    <source>
        <dbReference type="PROSITE-ProRule" id="PRU00184"/>
    </source>
</evidence>
<evidence type="ECO:0000256" key="4">
    <source>
        <dbReference type="SAM" id="MobiDB-lite"/>
    </source>
</evidence>
<evidence type="ECO:0000269" key="5">
    <source>
    </source>
</evidence>
<evidence type="ECO:0000269" key="6">
    <source>
    </source>
</evidence>
<evidence type="ECO:0000269" key="7">
    <source>
    </source>
</evidence>
<evidence type="ECO:0000269" key="8">
    <source>
    </source>
</evidence>
<evidence type="ECO:0000269" key="9">
    <source>
    </source>
</evidence>
<evidence type="ECO:0000269" key="10">
    <source>
    </source>
</evidence>
<evidence type="ECO:0000305" key="11"/>
<protein>
    <recommendedName>
        <fullName>Ankyrin repeat and SAM domain-containing protein 6</fullName>
    </recommendedName>
    <alternativeName>
        <fullName>Polycystic kidney disease protein 1</fullName>
    </alternativeName>
    <alternativeName>
        <fullName>SamCystin</fullName>
    </alternativeName>
    <alternativeName>
        <fullName>Sterile alpha motif domain-containing protein 6</fullName>
        <shortName>SAM domain-containing protein 6</shortName>
    </alternativeName>
</protein>
<reference key="1">
    <citation type="journal article" date="2005" name="J. Am. Soc. Nephrol.">
        <title>Missense mutation in sterile alpha motif of novel protein SamCystin is associated with polycystic kidney disease in (cy/+) rat.</title>
        <authorList>
            <person name="Brown J.H."/>
            <person name="Bihoreau M.-T."/>
            <person name="Hoffmann S."/>
            <person name="Kranzlin B."/>
            <person name="Tychinskaya I."/>
            <person name="Obermuller N."/>
            <person name="Podlich D."/>
            <person name="Boehn S.N."/>
            <person name="Kaisaki P.J."/>
            <person name="Megel N."/>
            <person name="Danoy P."/>
            <person name="Copley R.R."/>
            <person name="Broxholme J."/>
            <person name="Witzgall R."/>
            <person name="Lathrop M."/>
            <person name="Gretz N."/>
            <person name="Gauguier D."/>
        </authorList>
    </citation>
    <scope>NUCLEOTIDE SEQUENCE [MRNA]</scope>
    <scope>FUNCTION</scope>
    <scope>TISSUE SPECIFICITY</scope>
    <scope>INVOLVEMENT IN CY</scope>
    <scope>VARIANT CY TRP-823</scope>
    <source>
        <strain>Brown Norway</strain>
        <tissue>Kidney</tissue>
    </source>
</reference>
<reference key="2">
    <citation type="journal article" date="2004" name="Nature">
        <title>Genome sequence of the Brown Norway rat yields insights into mammalian evolution.</title>
        <authorList>
            <person name="Gibbs R.A."/>
            <person name="Weinstock G.M."/>
            <person name="Metzker M.L."/>
            <person name="Muzny D.M."/>
            <person name="Sodergren E.J."/>
            <person name="Scherer S."/>
            <person name="Scott G."/>
            <person name="Steffen D."/>
            <person name="Worley K.C."/>
            <person name="Burch P.E."/>
            <person name="Okwuonu G."/>
            <person name="Hines S."/>
            <person name="Lewis L."/>
            <person name="Deramo C."/>
            <person name="Delgado O."/>
            <person name="Dugan-Rocha S."/>
            <person name="Miner G."/>
            <person name="Morgan M."/>
            <person name="Hawes A."/>
            <person name="Gill R."/>
            <person name="Holt R.A."/>
            <person name="Adams M.D."/>
            <person name="Amanatides P.G."/>
            <person name="Baden-Tillson H."/>
            <person name="Barnstead M."/>
            <person name="Chin S."/>
            <person name="Evans C.A."/>
            <person name="Ferriera S."/>
            <person name="Fosler C."/>
            <person name="Glodek A."/>
            <person name="Gu Z."/>
            <person name="Jennings D."/>
            <person name="Kraft C.L."/>
            <person name="Nguyen T."/>
            <person name="Pfannkoch C.M."/>
            <person name="Sitter C."/>
            <person name="Sutton G.G."/>
            <person name="Venter J.C."/>
            <person name="Woodage T."/>
            <person name="Smith D."/>
            <person name="Lee H.-M."/>
            <person name="Gustafson E."/>
            <person name="Cahill P."/>
            <person name="Kana A."/>
            <person name="Doucette-Stamm L."/>
            <person name="Weinstock K."/>
            <person name="Fechtel K."/>
            <person name="Weiss R.B."/>
            <person name="Dunn D.M."/>
            <person name="Green E.D."/>
            <person name="Blakesley R.W."/>
            <person name="Bouffard G.G."/>
            <person name="De Jong P.J."/>
            <person name="Osoegawa K."/>
            <person name="Zhu B."/>
            <person name="Marra M."/>
            <person name="Schein J."/>
            <person name="Bosdet I."/>
            <person name="Fjell C."/>
            <person name="Jones S."/>
            <person name="Krzywinski M."/>
            <person name="Mathewson C."/>
            <person name="Siddiqui A."/>
            <person name="Wye N."/>
            <person name="McPherson J."/>
            <person name="Zhao S."/>
            <person name="Fraser C.M."/>
            <person name="Shetty J."/>
            <person name="Shatsman S."/>
            <person name="Geer K."/>
            <person name="Chen Y."/>
            <person name="Abramzon S."/>
            <person name="Nierman W.C."/>
            <person name="Havlak P.H."/>
            <person name="Chen R."/>
            <person name="Durbin K.J."/>
            <person name="Egan A."/>
            <person name="Ren Y."/>
            <person name="Song X.-Z."/>
            <person name="Li B."/>
            <person name="Liu Y."/>
            <person name="Qin X."/>
            <person name="Cawley S."/>
            <person name="Cooney A.J."/>
            <person name="D'Souza L.M."/>
            <person name="Martin K."/>
            <person name="Wu J.Q."/>
            <person name="Gonzalez-Garay M.L."/>
            <person name="Jackson A.R."/>
            <person name="Kalafus K.J."/>
            <person name="McLeod M.P."/>
            <person name="Milosavljevic A."/>
            <person name="Virk D."/>
            <person name="Volkov A."/>
            <person name="Wheeler D.A."/>
            <person name="Zhang Z."/>
            <person name="Bailey J.A."/>
            <person name="Eichler E.E."/>
            <person name="Tuzun E."/>
            <person name="Birney E."/>
            <person name="Mongin E."/>
            <person name="Ureta-Vidal A."/>
            <person name="Woodwark C."/>
            <person name="Zdobnov E."/>
            <person name="Bork P."/>
            <person name="Suyama M."/>
            <person name="Torrents D."/>
            <person name="Alexandersson M."/>
            <person name="Trask B.J."/>
            <person name="Young J.M."/>
            <person name="Huang H."/>
            <person name="Wang H."/>
            <person name="Xing H."/>
            <person name="Daniels S."/>
            <person name="Gietzen D."/>
            <person name="Schmidt J."/>
            <person name="Stevens K."/>
            <person name="Vitt U."/>
            <person name="Wingrove J."/>
            <person name="Camara F."/>
            <person name="Mar Alba M."/>
            <person name="Abril J.F."/>
            <person name="Guigo R."/>
            <person name="Smit A."/>
            <person name="Dubchak I."/>
            <person name="Rubin E.M."/>
            <person name="Couronne O."/>
            <person name="Poliakov A."/>
            <person name="Huebner N."/>
            <person name="Ganten D."/>
            <person name="Goesele C."/>
            <person name="Hummel O."/>
            <person name="Kreitler T."/>
            <person name="Lee Y.-A."/>
            <person name="Monti J."/>
            <person name="Schulz H."/>
            <person name="Zimdahl H."/>
            <person name="Himmelbauer H."/>
            <person name="Lehrach H."/>
            <person name="Jacob H.J."/>
            <person name="Bromberg S."/>
            <person name="Gullings-Handley J."/>
            <person name="Jensen-Seaman M.I."/>
            <person name="Kwitek A.E."/>
            <person name="Lazar J."/>
            <person name="Pasko D."/>
            <person name="Tonellato P.J."/>
            <person name="Twigger S."/>
            <person name="Ponting C.P."/>
            <person name="Duarte J.M."/>
            <person name="Rice S."/>
            <person name="Goodstadt L."/>
            <person name="Beatson S.A."/>
            <person name="Emes R.D."/>
            <person name="Winter E.E."/>
            <person name="Webber C."/>
            <person name="Brandt P."/>
            <person name="Nyakatura G."/>
            <person name="Adetobi M."/>
            <person name="Chiaromonte F."/>
            <person name="Elnitski L."/>
            <person name="Eswara P."/>
            <person name="Hardison R.C."/>
            <person name="Hou M."/>
            <person name="Kolbe D."/>
            <person name="Makova K."/>
            <person name="Miller W."/>
            <person name="Nekrutenko A."/>
            <person name="Riemer C."/>
            <person name="Schwartz S."/>
            <person name="Taylor J."/>
            <person name="Yang S."/>
            <person name="Zhang Y."/>
            <person name="Lindpaintner K."/>
            <person name="Andrews T.D."/>
            <person name="Caccamo M."/>
            <person name="Clamp M."/>
            <person name="Clarke L."/>
            <person name="Curwen V."/>
            <person name="Durbin R.M."/>
            <person name="Eyras E."/>
            <person name="Searle S.M."/>
            <person name="Cooper G.M."/>
            <person name="Batzoglou S."/>
            <person name="Brudno M."/>
            <person name="Sidow A."/>
            <person name="Stone E.A."/>
            <person name="Payseur B.A."/>
            <person name="Bourque G."/>
            <person name="Lopez-Otin C."/>
            <person name="Puente X.S."/>
            <person name="Chakrabarti K."/>
            <person name="Chatterji S."/>
            <person name="Dewey C."/>
            <person name="Pachter L."/>
            <person name="Bray N."/>
            <person name="Yap V.B."/>
            <person name="Caspi A."/>
            <person name="Tesler G."/>
            <person name="Pevzner P.A."/>
            <person name="Haussler D."/>
            <person name="Roskin K.M."/>
            <person name="Baertsch R."/>
            <person name="Clawson H."/>
            <person name="Furey T.S."/>
            <person name="Hinrichs A.S."/>
            <person name="Karolchik D."/>
            <person name="Kent W.J."/>
            <person name="Rosenbloom K.R."/>
            <person name="Trumbower H."/>
            <person name="Weirauch M."/>
            <person name="Cooper D.N."/>
            <person name="Stenson P.D."/>
            <person name="Ma B."/>
            <person name="Brent M."/>
            <person name="Arumugam M."/>
            <person name="Shteynberg D."/>
            <person name="Copley R.R."/>
            <person name="Taylor M.S."/>
            <person name="Riethman H."/>
            <person name="Mudunuri U."/>
            <person name="Peterson J."/>
            <person name="Guyer M."/>
            <person name="Felsenfeld A."/>
            <person name="Old S."/>
            <person name="Mockrin S."/>
            <person name="Collins F.S."/>
        </authorList>
    </citation>
    <scope>NUCLEOTIDE SEQUENCE [LARGE SCALE GENOMIC DNA]</scope>
    <source>
        <strain>Brown Norway</strain>
    </source>
</reference>
<reference key="3">
    <citation type="journal article" date="2004" name="Genome Res.">
        <title>The status, quality, and expansion of the NIH full-length cDNA project: the Mammalian Gene Collection (MGC).</title>
        <authorList>
            <consortium name="The MGC Project Team"/>
        </authorList>
    </citation>
    <scope>NUCLEOTIDE SEQUENCE [LARGE SCALE MRNA] OF 864-885</scope>
    <source>
        <tissue>Spleen</tissue>
    </source>
</reference>
<reference key="4">
    <citation type="journal article" date="2009" name="Biochem. Biophys. Res. Commun.">
        <title>The polycystic kidney disease-related proteins Bicc1 and SamCystin interact.</title>
        <authorList>
            <person name="Stagner E.E."/>
            <person name="Bouvrette D.J."/>
            <person name="Cheng J."/>
            <person name="Bryda E.C."/>
        </authorList>
    </citation>
    <scope>SUBCELLULAR LOCATION</scope>
    <scope>SUBUNIT</scope>
    <scope>INTERACTION WITH BICC1</scope>
    <scope>CHARACTERIZATION OF VARIANT CY TRP-823</scope>
</reference>
<reference key="5">
    <citation type="journal article" date="2013" name="Nat. Genet.">
        <title>ANKS6 is a central component of a nephronophthisis module linking NEK8 to INVS and NPHP3.</title>
        <authorList>
            <person name="Hoff S."/>
            <person name="Halbritter J."/>
            <person name="Epting D."/>
            <person name="Frank V."/>
            <person name="Nguyen T.M."/>
            <person name="van Reeuwijk J."/>
            <person name="Boehlke C."/>
            <person name="Schell C."/>
            <person name="Yasunaga T."/>
            <person name="Helmstadter M."/>
            <person name="Mergen M."/>
            <person name="Filhol E."/>
            <person name="Boldt K."/>
            <person name="Horn N."/>
            <person name="Ueffing M."/>
            <person name="Otto E.A."/>
            <person name="Eisenberger T."/>
            <person name="Elting M.W."/>
            <person name="van Wijk J.A."/>
            <person name="Bockenhauer D."/>
            <person name="Sebire N.J."/>
            <person name="Rittig S."/>
            <person name="Vyberg M."/>
            <person name="Ring T."/>
            <person name="Pohl M."/>
            <person name="Pape L."/>
            <person name="Neuhaus T.J."/>
            <person name="Elshakhs N.A."/>
            <person name="Koon S.J."/>
            <person name="Harris P.C."/>
            <person name="Grahammer F."/>
            <person name="Huber T.B."/>
            <person name="Kuehn E.W."/>
            <person name="Kramer-Zucker A."/>
            <person name="Bolz H.J."/>
            <person name="Roepman R."/>
            <person name="Saunier S."/>
            <person name="Walz G."/>
            <person name="Hildebrandt F."/>
            <person name="Bergmann C."/>
            <person name="Lienkamp S.S."/>
        </authorList>
    </citation>
    <scope>INTERACTION WITH INVS; NEK8 AND NPHP3</scope>
    <scope>DOMAIN ANK REPEATS</scope>
    <scope>HYDROXYLATION AT ASN-129</scope>
    <scope>MUTAGENESIS OF ASN-129; ASN-209 AND GLN-433</scope>
</reference>
<reference key="6">
    <citation type="journal article" date="2015" name="Biochem. Biophys. Res. Commun.">
        <title>Anks3 alters the sub-cellular localization of the Nek7 kinase.</title>
        <authorList>
            <person name="Ramachandran H."/>
            <person name="Engel C."/>
            <person name="Mueller B."/>
            <person name="Dengjel J."/>
            <person name="Walz G."/>
            <person name="Yakulov T.A."/>
        </authorList>
    </citation>
    <scope>INTERACTION WITH ANKS3</scope>
</reference>
<reference key="7">
    <citation type="journal article" date="2015" name="Kidney Int.">
        <title>Anks3 interacts with nephronophthisis proteins and is required for normal renal development.</title>
        <authorList>
            <person name="Yakulov T.A."/>
            <person name="Yasunaga T."/>
            <person name="Ramachandran H."/>
            <person name="Engel C."/>
            <person name="Mueller B."/>
            <person name="Hoff S."/>
            <person name="Dengjel J."/>
            <person name="Lienkamp S.S."/>
            <person name="Walz G."/>
        </authorList>
    </citation>
    <scope>INTERACTION WITH ANKS3</scope>
</reference>
<reference key="8">
    <citation type="journal article" date="2015" name="PLoS ONE">
        <title>ANKS3 Co-Localises with ANKS6 in Mouse Renal Cilia and Is Associated with Vasopressin Signaling and Apoptosis In Vivo in Mice.</title>
        <authorList>
            <person name="Delestre L."/>
            <person name="Bakey Z."/>
            <person name="Prado C."/>
            <person name="Hoffmann S."/>
            <person name="Bihoreau M.T."/>
            <person name="Lelongt B."/>
            <person name="Gauguier D."/>
        </authorList>
    </citation>
    <scope>INTERACTION WITH ANKS3</scope>
    <scope>CHARACTERIZATION OF VARIANT CY TRP-823</scope>
    <scope>SITE</scope>
</reference>
<feature type="chain" id="PRO_0000067067" description="Ankyrin repeat and SAM domain-containing protein 6">
    <location>
        <begin position="1"/>
        <end position="885"/>
    </location>
</feature>
<feature type="repeat" description="ANK 1">
    <location>
        <begin position="8"/>
        <end position="37"/>
    </location>
</feature>
<feature type="repeat" description="ANK 2">
    <location>
        <begin position="68"/>
        <end position="97"/>
    </location>
</feature>
<feature type="repeat" description="ANK 3">
    <location>
        <begin position="101"/>
        <end position="130"/>
    </location>
</feature>
<feature type="repeat" description="ANK 4">
    <location>
        <begin position="134"/>
        <end position="163"/>
    </location>
</feature>
<feature type="repeat" description="ANK 5">
    <location>
        <begin position="181"/>
        <end position="210"/>
    </location>
</feature>
<feature type="repeat" description="ANK 6">
    <location>
        <begin position="215"/>
        <end position="244"/>
    </location>
</feature>
<feature type="repeat" description="ANK 7">
    <location>
        <begin position="282"/>
        <end position="312"/>
    </location>
</feature>
<feature type="repeat" description="ANK 8">
    <location>
        <begin position="316"/>
        <end position="345"/>
    </location>
</feature>
<feature type="repeat" description="ANK 9">
    <location>
        <begin position="350"/>
        <end position="379"/>
    </location>
</feature>
<feature type="repeat" description="ANK 10">
    <location>
        <begin position="383"/>
        <end position="414"/>
    </location>
</feature>
<feature type="domain" description="SAM" evidence="3">
    <location>
        <begin position="773"/>
        <end position="836"/>
    </location>
</feature>
<feature type="region of interest" description="Disordered" evidence="4">
    <location>
        <begin position="415"/>
        <end position="439"/>
    </location>
</feature>
<feature type="region of interest" description="Disordered" evidence="4">
    <location>
        <begin position="491"/>
        <end position="522"/>
    </location>
</feature>
<feature type="region of interest" description="Disordered" evidence="4">
    <location>
        <begin position="563"/>
        <end position="775"/>
    </location>
</feature>
<feature type="region of interest" description="Disordered" evidence="4">
    <location>
        <begin position="855"/>
        <end position="885"/>
    </location>
</feature>
<feature type="compositionally biased region" description="Low complexity" evidence="4">
    <location>
        <begin position="608"/>
        <end position="640"/>
    </location>
</feature>
<feature type="compositionally biased region" description="Polar residues" evidence="4">
    <location>
        <begin position="650"/>
        <end position="662"/>
    </location>
</feature>
<feature type="compositionally biased region" description="Low complexity" evidence="4">
    <location>
        <begin position="689"/>
        <end position="713"/>
    </location>
</feature>
<feature type="compositionally biased region" description="Low complexity" evidence="4">
    <location>
        <begin position="722"/>
        <end position="739"/>
    </location>
</feature>
<feature type="compositionally biased region" description="Low complexity" evidence="4">
    <location>
        <begin position="750"/>
        <end position="770"/>
    </location>
</feature>
<feature type="compositionally biased region" description="Polar residues" evidence="4">
    <location>
        <begin position="855"/>
        <end position="865"/>
    </location>
</feature>
<feature type="compositionally biased region" description="Basic and acidic residues" evidence="4">
    <location>
        <begin position="876"/>
        <end position="885"/>
    </location>
</feature>
<feature type="site" description="Essential for ANKS3 interaction" evidence="10">
    <location>
        <position position="823"/>
    </location>
</feature>
<feature type="modified residue" description="3-hydroxyasparagine" evidence="7">
    <location>
        <position position="129"/>
    </location>
</feature>
<feature type="modified residue" description="Phosphoserine" evidence="1">
    <location>
        <position position="650"/>
    </location>
</feature>
<feature type="modified residue" description="Phosphoserine" evidence="1">
    <location>
        <position position="734"/>
    </location>
</feature>
<feature type="modified residue" description="Phosphoserine" evidence="1">
    <location>
        <position position="742"/>
    </location>
</feature>
<feature type="sequence variant" description="In cy; loss of ability to self-associate, does not affect interaction with Bicc1; loss of interaction with ANKS3." evidence="5 6 10">
    <original>R</original>
    <variation>W</variation>
    <location>
        <position position="823"/>
    </location>
</feature>
<feature type="mutagenesis site" description="Decreased NEK8-binding, but no effect on INVS-binding; when associated with A-209." evidence="7">
    <original>N</original>
    <variation>A</variation>
    <location>
        <position position="129"/>
    </location>
</feature>
<feature type="mutagenesis site" description="Decreased NEK8-binding, but no effect on INVS-binding; when associated with A-129." evidence="7">
    <original>N</original>
    <variation>A</variation>
    <location>
        <position position="209"/>
    </location>
</feature>
<feature type="mutagenesis site" description="No effect on interaction with INVS, NEK8 AND NPHP3, nor on ciliary localization. Unable to rescue ANKS6 knockout in a heterologous system." evidence="7">
    <original>Q</original>
    <variation>R</variation>
    <location>
        <position position="433"/>
    </location>
</feature>
<feature type="sequence conflict" description="In Ref. 1; AAT76432 and 3; AAH91436." evidence="11" ref="1 3">
    <original>C</original>
    <variation>S</variation>
    <location>
        <position position="870"/>
    </location>
</feature>
<sequence>MGEGALAPGLQLLLRACEQGDTDTARRLLEPGGEPVAGSEAGAEPAGPEAARAVEAGTPVPVDCSDEAGNSALQLAAAGGHEPLVRFLLRRGASVNSRNHYGWSALMQAARCGHASVAHLLLDHGADVNAQNRLGASVLTVASRGGHLGVVKLLLEAGATVDHRNPSGESTASGGSRDELLGITALMAAVQHGHEAVVRLLMEWGADPNHTARTVGWSPLMLAALLGKLSVVQQLVEKGANPDHLGVLEKTAFEVALDRKHRDLADYLDPLTTVRPKTDEEKRRPDIFHALKMGNFQLVKEIADEDPNHVNLVNGDGATPLMLAAVTGQLPLVQLLVEKHADMNKQDSVHGWTALMQATYHGNKEIVKYLLNQGADVTLRAKNGYTAFDLVMLLNDPDTELVRLLASVCMQVNKDRGGRPSHRPPLPHSKARQPWSIPMLPDDKGGLKSWWSRMSNRFRKLKLMQTLPRGLAANQPLPFSDEPELALDSTMRAPPQDRTNHLGPPEAAHAAKDSGPGNPRREKDDVLLTTMLRNGAPFPRLPSDKLKAVIPPFLPPSSFELWSSDRSRTCPNGKADPMKTVLPPRASRAHPVGCVGTDGAAGRPVKFPSISRSPTSPASSGNFNHSPHSSGGASGVGSMSRLGGELHNRSGGSVDSVLSQIAAQRKKAAGLCEQKPPCQQSSPVGPATGSSPPELPASLLGSGSGSSNVTSSSKKLDPGKRPPSGTSATSKSTSPTLTPSPSPKGHTAESSVSSSSSHRQSKSSGGSSSGTITDEDELTGILKKLSLEKYQPIFEEQEVDMEAFLTLTDGDLQELGIKTDGSRQQILAAISELNAGKGRERQILQETIHNFHSSFESSASNTRAPGNSPCMAGWVRPEETVSSRR</sequence>
<dbReference type="EMBL" id="AY661303">
    <property type="protein sequence ID" value="AAT76432.1"/>
    <property type="molecule type" value="mRNA"/>
</dbReference>
<dbReference type="EMBL" id="AABR03040311">
    <property type="status" value="NOT_ANNOTATED_CDS"/>
    <property type="molecule type" value="Genomic_DNA"/>
</dbReference>
<dbReference type="EMBL" id="BC091436">
    <property type="protein sequence ID" value="AAH91436.1"/>
    <property type="status" value="ALT_SEQ"/>
    <property type="molecule type" value="mRNA"/>
</dbReference>
<dbReference type="RefSeq" id="NP_001015028.2">
    <property type="nucleotide sequence ID" value="NM_001015028.2"/>
</dbReference>
<dbReference type="SMR" id="P0C0T2"/>
<dbReference type="CORUM" id="P0C0T2"/>
<dbReference type="FunCoup" id="P0C0T2">
    <property type="interactions" value="448"/>
</dbReference>
<dbReference type="STRING" id="10116.ENSRNOP00000056754"/>
<dbReference type="PhosphoSitePlus" id="P0C0T2"/>
<dbReference type="PaxDb" id="10116-ENSRNOP00000056754"/>
<dbReference type="GeneID" id="362515"/>
<dbReference type="KEGG" id="rno:362515"/>
<dbReference type="UCSC" id="RGD:3334">
    <property type="organism name" value="rat"/>
</dbReference>
<dbReference type="AGR" id="RGD:3334"/>
<dbReference type="CTD" id="203286"/>
<dbReference type="RGD" id="3334">
    <property type="gene designation" value="Anks6"/>
</dbReference>
<dbReference type="eggNOG" id="KOG0504">
    <property type="taxonomic scope" value="Eukaryota"/>
</dbReference>
<dbReference type="eggNOG" id="KOG4374">
    <property type="taxonomic scope" value="Eukaryota"/>
</dbReference>
<dbReference type="InParanoid" id="P0C0T2"/>
<dbReference type="OrthoDB" id="73810at9989"/>
<dbReference type="PhylomeDB" id="P0C0T2"/>
<dbReference type="TreeFam" id="TF328552"/>
<dbReference type="PRO" id="PR:P0C0T2"/>
<dbReference type="Proteomes" id="UP000002494">
    <property type="component" value="Unplaced"/>
</dbReference>
<dbReference type="GO" id="GO:0097543">
    <property type="term" value="C:ciliary inversin compartment"/>
    <property type="evidence" value="ECO:0000266"/>
    <property type="project" value="RGD"/>
</dbReference>
<dbReference type="GO" id="GO:0005737">
    <property type="term" value="C:cytoplasm"/>
    <property type="evidence" value="ECO:0000318"/>
    <property type="project" value="GO_Central"/>
</dbReference>
<dbReference type="GO" id="GO:0042802">
    <property type="term" value="F:identical protein binding"/>
    <property type="evidence" value="ECO:0000353"/>
    <property type="project" value="RGD"/>
</dbReference>
<dbReference type="GO" id="GO:0007368">
    <property type="term" value="P:determination of left/right symmetry"/>
    <property type="evidence" value="ECO:0000266"/>
    <property type="project" value="RGD"/>
</dbReference>
<dbReference type="GO" id="GO:0007507">
    <property type="term" value="P:heart development"/>
    <property type="evidence" value="ECO:0000266"/>
    <property type="project" value="RGD"/>
</dbReference>
<dbReference type="GO" id="GO:0001701">
    <property type="term" value="P:in utero embryonic development"/>
    <property type="evidence" value="ECO:0000266"/>
    <property type="project" value="RGD"/>
</dbReference>
<dbReference type="GO" id="GO:0045087">
    <property type="term" value="P:innate immune response"/>
    <property type="evidence" value="ECO:0000318"/>
    <property type="project" value="GO_Central"/>
</dbReference>
<dbReference type="GO" id="GO:0001822">
    <property type="term" value="P:kidney development"/>
    <property type="evidence" value="ECO:0000266"/>
    <property type="project" value="RGD"/>
</dbReference>
<dbReference type="CDD" id="cd09518">
    <property type="entry name" value="SAM_ANKS6"/>
    <property type="match status" value="1"/>
</dbReference>
<dbReference type="FunFam" id="1.25.40.20:FF:000178">
    <property type="entry name" value="Ankyrin repeat and sterile alpha motif domain containing 6"/>
    <property type="match status" value="1"/>
</dbReference>
<dbReference type="FunFam" id="1.10.150.50:FF:000025">
    <property type="entry name" value="Ankyrin repeat and sterile alpha motif domain-containing 6"/>
    <property type="match status" value="1"/>
</dbReference>
<dbReference type="Gene3D" id="1.25.40.20">
    <property type="entry name" value="Ankyrin repeat-containing domain"/>
    <property type="match status" value="3"/>
</dbReference>
<dbReference type="Gene3D" id="1.10.150.50">
    <property type="entry name" value="Transcription Factor, Ets-1"/>
    <property type="match status" value="1"/>
</dbReference>
<dbReference type="InterPro" id="IPR051631">
    <property type="entry name" value="Ankyrin-KH/SAM_domain"/>
</dbReference>
<dbReference type="InterPro" id="IPR002110">
    <property type="entry name" value="Ankyrin_rpt"/>
</dbReference>
<dbReference type="InterPro" id="IPR036770">
    <property type="entry name" value="Ankyrin_rpt-contain_sf"/>
</dbReference>
<dbReference type="InterPro" id="IPR001660">
    <property type="entry name" value="SAM"/>
</dbReference>
<dbReference type="InterPro" id="IPR013761">
    <property type="entry name" value="SAM/pointed_sf"/>
</dbReference>
<dbReference type="PANTHER" id="PTHR23206">
    <property type="entry name" value="MASK PROTEIN"/>
    <property type="match status" value="1"/>
</dbReference>
<dbReference type="PANTHER" id="PTHR23206:SF7">
    <property type="entry name" value="PROTEIN KINASE DOMAIN-CONTAINING PROTEIN"/>
    <property type="match status" value="1"/>
</dbReference>
<dbReference type="Pfam" id="PF00023">
    <property type="entry name" value="Ank"/>
    <property type="match status" value="1"/>
</dbReference>
<dbReference type="Pfam" id="PF12796">
    <property type="entry name" value="Ank_2"/>
    <property type="match status" value="3"/>
</dbReference>
<dbReference type="Pfam" id="PF00536">
    <property type="entry name" value="SAM_1"/>
    <property type="match status" value="1"/>
</dbReference>
<dbReference type="PRINTS" id="PR01415">
    <property type="entry name" value="ANKYRIN"/>
</dbReference>
<dbReference type="SMART" id="SM00248">
    <property type="entry name" value="ANK"/>
    <property type="match status" value="10"/>
</dbReference>
<dbReference type="SMART" id="SM00454">
    <property type="entry name" value="SAM"/>
    <property type="match status" value="1"/>
</dbReference>
<dbReference type="SUPFAM" id="SSF48403">
    <property type="entry name" value="Ankyrin repeat"/>
    <property type="match status" value="2"/>
</dbReference>
<dbReference type="SUPFAM" id="SSF47769">
    <property type="entry name" value="SAM/Pointed domain"/>
    <property type="match status" value="1"/>
</dbReference>
<dbReference type="PROSITE" id="PS50297">
    <property type="entry name" value="ANK_REP_REGION"/>
    <property type="match status" value="1"/>
</dbReference>
<dbReference type="PROSITE" id="PS50088">
    <property type="entry name" value="ANK_REPEAT"/>
    <property type="match status" value="7"/>
</dbReference>
<dbReference type="PROSITE" id="PS50105">
    <property type="entry name" value="SAM_DOMAIN"/>
    <property type="match status" value="1"/>
</dbReference>
<keyword id="KW-0040">ANK repeat</keyword>
<keyword id="KW-0966">Cell projection</keyword>
<keyword id="KW-0969">Cilium</keyword>
<keyword id="KW-0963">Cytoplasm</keyword>
<keyword id="KW-0225">Disease variant</keyword>
<keyword id="KW-0379">Hydroxylation</keyword>
<keyword id="KW-0597">Phosphoprotein</keyword>
<keyword id="KW-1185">Reference proteome</keyword>
<keyword id="KW-0677">Repeat</keyword>
<name>ANKS6_RAT</name>
<accession>P0C0T2</accession>
<accession>Q2VWC0</accession>
<accession>Q5BJL2</accession>